<sequence>MIETDKLAAERIIAATPVSPNEEAFERALRPRQLEEYVGQEKVRGQLEIFIEAAKRRSESLDHVLLFGPPGLGKTTLAHIIAREMGVNLRQTSGPVLERAGDLAALLTNLEANDVLFIDEIHRLSPVVEEILYPALEDYQIDIMIGEGPAARSVKLDLQPFTLVGATTRAGMLTNPLRDRFGIVARLEFYNAEQLARIVTRSASLLHAQIHPDGAFEIAKRARGTPRIANRLLRRVRDFAEVKADGNITAQVADAALKMLDVDAVGFDLMDRKLLEAILHKFDGGPVGVDNLAAAIGEERDTIEDVLEPYLIQQGFLQRTPRGRVATLLTYRHFGLAAPDSSSSTLPGLWDSAAT</sequence>
<organism>
    <name type="scientific">Paraburkholderia xenovorans (strain LB400)</name>
    <dbReference type="NCBI Taxonomy" id="266265"/>
    <lineage>
        <taxon>Bacteria</taxon>
        <taxon>Pseudomonadati</taxon>
        <taxon>Pseudomonadota</taxon>
        <taxon>Betaproteobacteria</taxon>
        <taxon>Burkholderiales</taxon>
        <taxon>Burkholderiaceae</taxon>
        <taxon>Paraburkholderia</taxon>
    </lineage>
</organism>
<gene>
    <name evidence="1" type="primary">ruvB</name>
    <name type="ordered locus">Bxeno_A3781</name>
    <name type="ORF">Bxe_A0615</name>
</gene>
<name>RUVB_PARXL</name>
<reference key="1">
    <citation type="journal article" date="2006" name="Proc. Natl. Acad. Sci. U.S.A.">
        <title>Burkholderia xenovorans LB400 harbors a multi-replicon, 9.73-Mbp genome shaped for versatility.</title>
        <authorList>
            <person name="Chain P.S.G."/>
            <person name="Denef V.J."/>
            <person name="Konstantinidis K.T."/>
            <person name="Vergez L.M."/>
            <person name="Agullo L."/>
            <person name="Reyes V.L."/>
            <person name="Hauser L."/>
            <person name="Cordova M."/>
            <person name="Gomez L."/>
            <person name="Gonzalez M."/>
            <person name="Land M."/>
            <person name="Lao V."/>
            <person name="Larimer F."/>
            <person name="LiPuma J.J."/>
            <person name="Mahenthiralingam E."/>
            <person name="Malfatti S.A."/>
            <person name="Marx C.J."/>
            <person name="Parnell J.J."/>
            <person name="Ramette A."/>
            <person name="Richardson P."/>
            <person name="Seeger M."/>
            <person name="Smith D."/>
            <person name="Spilker T."/>
            <person name="Sul W.J."/>
            <person name="Tsoi T.V."/>
            <person name="Ulrich L.E."/>
            <person name="Zhulin I.B."/>
            <person name="Tiedje J.M."/>
        </authorList>
    </citation>
    <scope>NUCLEOTIDE SEQUENCE [LARGE SCALE GENOMIC DNA]</scope>
    <source>
        <strain>LB400</strain>
    </source>
</reference>
<proteinExistence type="inferred from homology"/>
<accession>Q13UC0</accession>
<feature type="chain" id="PRO_1000001377" description="Holliday junction branch migration complex subunit RuvB">
    <location>
        <begin position="1"/>
        <end position="355"/>
    </location>
</feature>
<feature type="region of interest" description="Large ATPase domain (RuvB-L)" evidence="1">
    <location>
        <begin position="4"/>
        <end position="190"/>
    </location>
</feature>
<feature type="region of interest" description="Small ATPAse domain (RuvB-S)" evidence="1">
    <location>
        <begin position="191"/>
        <end position="261"/>
    </location>
</feature>
<feature type="region of interest" description="Head domain (RuvB-H)" evidence="1">
    <location>
        <begin position="264"/>
        <end position="355"/>
    </location>
</feature>
<feature type="binding site" evidence="1">
    <location>
        <position position="29"/>
    </location>
    <ligand>
        <name>ATP</name>
        <dbReference type="ChEBI" id="CHEBI:30616"/>
    </ligand>
</feature>
<feature type="binding site" evidence="1">
    <location>
        <position position="30"/>
    </location>
    <ligand>
        <name>ATP</name>
        <dbReference type="ChEBI" id="CHEBI:30616"/>
    </ligand>
</feature>
<feature type="binding site" evidence="1">
    <location>
        <position position="71"/>
    </location>
    <ligand>
        <name>ATP</name>
        <dbReference type="ChEBI" id="CHEBI:30616"/>
    </ligand>
</feature>
<feature type="binding site" evidence="1">
    <location>
        <position position="74"/>
    </location>
    <ligand>
        <name>ATP</name>
        <dbReference type="ChEBI" id="CHEBI:30616"/>
    </ligand>
</feature>
<feature type="binding site" evidence="1">
    <location>
        <position position="75"/>
    </location>
    <ligand>
        <name>ATP</name>
        <dbReference type="ChEBI" id="CHEBI:30616"/>
    </ligand>
</feature>
<feature type="binding site" evidence="1">
    <location>
        <position position="75"/>
    </location>
    <ligand>
        <name>Mg(2+)</name>
        <dbReference type="ChEBI" id="CHEBI:18420"/>
    </ligand>
</feature>
<feature type="binding site" evidence="1">
    <location>
        <position position="76"/>
    </location>
    <ligand>
        <name>ATP</name>
        <dbReference type="ChEBI" id="CHEBI:30616"/>
    </ligand>
</feature>
<feature type="binding site" evidence="1">
    <location>
        <begin position="137"/>
        <end position="139"/>
    </location>
    <ligand>
        <name>ATP</name>
        <dbReference type="ChEBI" id="CHEBI:30616"/>
    </ligand>
</feature>
<feature type="binding site" evidence="1">
    <location>
        <position position="180"/>
    </location>
    <ligand>
        <name>ATP</name>
        <dbReference type="ChEBI" id="CHEBI:30616"/>
    </ligand>
</feature>
<feature type="binding site" evidence="1">
    <location>
        <position position="190"/>
    </location>
    <ligand>
        <name>ATP</name>
        <dbReference type="ChEBI" id="CHEBI:30616"/>
    </ligand>
</feature>
<feature type="binding site" evidence="1">
    <location>
        <position position="227"/>
    </location>
    <ligand>
        <name>ATP</name>
        <dbReference type="ChEBI" id="CHEBI:30616"/>
    </ligand>
</feature>
<feature type="binding site" evidence="1">
    <location>
        <position position="300"/>
    </location>
    <ligand>
        <name>DNA</name>
        <dbReference type="ChEBI" id="CHEBI:16991"/>
    </ligand>
</feature>
<feature type="binding site" evidence="1">
    <location>
        <position position="319"/>
    </location>
    <ligand>
        <name>DNA</name>
        <dbReference type="ChEBI" id="CHEBI:16991"/>
    </ligand>
</feature>
<feature type="binding site" evidence="1">
    <location>
        <position position="324"/>
    </location>
    <ligand>
        <name>DNA</name>
        <dbReference type="ChEBI" id="CHEBI:16991"/>
    </ligand>
</feature>
<dbReference type="EC" id="3.6.4.-" evidence="1"/>
<dbReference type="EMBL" id="CP000270">
    <property type="protein sequence ID" value="ABE32319.1"/>
    <property type="molecule type" value="Genomic_DNA"/>
</dbReference>
<dbReference type="RefSeq" id="WP_007180435.1">
    <property type="nucleotide sequence ID" value="NZ_CP008760.1"/>
</dbReference>
<dbReference type="SMR" id="Q13UC0"/>
<dbReference type="STRING" id="266265.Bxe_A0615"/>
<dbReference type="KEGG" id="bxb:DR64_2783"/>
<dbReference type="KEGG" id="bxe:Bxe_A0615"/>
<dbReference type="eggNOG" id="COG2255">
    <property type="taxonomic scope" value="Bacteria"/>
</dbReference>
<dbReference type="OrthoDB" id="9804478at2"/>
<dbReference type="Proteomes" id="UP000001817">
    <property type="component" value="Chromosome 1"/>
</dbReference>
<dbReference type="GO" id="GO:0005737">
    <property type="term" value="C:cytoplasm"/>
    <property type="evidence" value="ECO:0007669"/>
    <property type="project" value="UniProtKB-SubCell"/>
</dbReference>
<dbReference type="GO" id="GO:0048476">
    <property type="term" value="C:Holliday junction resolvase complex"/>
    <property type="evidence" value="ECO:0007669"/>
    <property type="project" value="UniProtKB-UniRule"/>
</dbReference>
<dbReference type="GO" id="GO:0005524">
    <property type="term" value="F:ATP binding"/>
    <property type="evidence" value="ECO:0007669"/>
    <property type="project" value="UniProtKB-UniRule"/>
</dbReference>
<dbReference type="GO" id="GO:0016887">
    <property type="term" value="F:ATP hydrolysis activity"/>
    <property type="evidence" value="ECO:0007669"/>
    <property type="project" value="InterPro"/>
</dbReference>
<dbReference type="GO" id="GO:0000400">
    <property type="term" value="F:four-way junction DNA binding"/>
    <property type="evidence" value="ECO:0007669"/>
    <property type="project" value="UniProtKB-UniRule"/>
</dbReference>
<dbReference type="GO" id="GO:0009378">
    <property type="term" value="F:four-way junction helicase activity"/>
    <property type="evidence" value="ECO:0007669"/>
    <property type="project" value="InterPro"/>
</dbReference>
<dbReference type="GO" id="GO:0006310">
    <property type="term" value="P:DNA recombination"/>
    <property type="evidence" value="ECO:0007669"/>
    <property type="project" value="UniProtKB-UniRule"/>
</dbReference>
<dbReference type="GO" id="GO:0006281">
    <property type="term" value="P:DNA repair"/>
    <property type="evidence" value="ECO:0007669"/>
    <property type="project" value="UniProtKB-UniRule"/>
</dbReference>
<dbReference type="CDD" id="cd00009">
    <property type="entry name" value="AAA"/>
    <property type="match status" value="1"/>
</dbReference>
<dbReference type="FunFam" id="1.10.10.10:FF:000086">
    <property type="entry name" value="Holliday junction ATP-dependent DNA helicase RuvB"/>
    <property type="match status" value="1"/>
</dbReference>
<dbReference type="FunFam" id="1.10.8.60:FF:000023">
    <property type="entry name" value="Holliday junction ATP-dependent DNA helicase RuvB"/>
    <property type="match status" value="1"/>
</dbReference>
<dbReference type="FunFam" id="3.40.50.300:FF:000073">
    <property type="entry name" value="Holliday junction ATP-dependent DNA helicase RuvB"/>
    <property type="match status" value="1"/>
</dbReference>
<dbReference type="Gene3D" id="1.10.8.60">
    <property type="match status" value="1"/>
</dbReference>
<dbReference type="Gene3D" id="3.40.50.300">
    <property type="entry name" value="P-loop containing nucleotide triphosphate hydrolases"/>
    <property type="match status" value="1"/>
</dbReference>
<dbReference type="Gene3D" id="1.10.10.10">
    <property type="entry name" value="Winged helix-like DNA-binding domain superfamily/Winged helix DNA-binding domain"/>
    <property type="match status" value="1"/>
</dbReference>
<dbReference type="HAMAP" id="MF_00016">
    <property type="entry name" value="DNA_HJ_migration_RuvB"/>
    <property type="match status" value="1"/>
</dbReference>
<dbReference type="InterPro" id="IPR003593">
    <property type="entry name" value="AAA+_ATPase"/>
</dbReference>
<dbReference type="InterPro" id="IPR041445">
    <property type="entry name" value="AAA_lid_4"/>
</dbReference>
<dbReference type="InterPro" id="IPR004605">
    <property type="entry name" value="DNA_helicase_Holl-junc_RuvB"/>
</dbReference>
<dbReference type="InterPro" id="IPR027417">
    <property type="entry name" value="P-loop_NTPase"/>
</dbReference>
<dbReference type="InterPro" id="IPR008824">
    <property type="entry name" value="RuvB-like_N"/>
</dbReference>
<dbReference type="InterPro" id="IPR008823">
    <property type="entry name" value="RuvB_C"/>
</dbReference>
<dbReference type="InterPro" id="IPR036388">
    <property type="entry name" value="WH-like_DNA-bd_sf"/>
</dbReference>
<dbReference type="InterPro" id="IPR036390">
    <property type="entry name" value="WH_DNA-bd_sf"/>
</dbReference>
<dbReference type="NCBIfam" id="NF000868">
    <property type="entry name" value="PRK00080.1"/>
    <property type="match status" value="1"/>
</dbReference>
<dbReference type="NCBIfam" id="TIGR00635">
    <property type="entry name" value="ruvB"/>
    <property type="match status" value="1"/>
</dbReference>
<dbReference type="PANTHER" id="PTHR42848">
    <property type="match status" value="1"/>
</dbReference>
<dbReference type="PANTHER" id="PTHR42848:SF1">
    <property type="entry name" value="HOLLIDAY JUNCTION BRANCH MIGRATION COMPLEX SUBUNIT RUVB"/>
    <property type="match status" value="1"/>
</dbReference>
<dbReference type="Pfam" id="PF17864">
    <property type="entry name" value="AAA_lid_4"/>
    <property type="match status" value="1"/>
</dbReference>
<dbReference type="Pfam" id="PF05491">
    <property type="entry name" value="RuvB_C"/>
    <property type="match status" value="1"/>
</dbReference>
<dbReference type="Pfam" id="PF05496">
    <property type="entry name" value="RuvB_N"/>
    <property type="match status" value="1"/>
</dbReference>
<dbReference type="SMART" id="SM00382">
    <property type="entry name" value="AAA"/>
    <property type="match status" value="1"/>
</dbReference>
<dbReference type="SUPFAM" id="SSF52540">
    <property type="entry name" value="P-loop containing nucleoside triphosphate hydrolases"/>
    <property type="match status" value="1"/>
</dbReference>
<dbReference type="SUPFAM" id="SSF46785">
    <property type="entry name" value="Winged helix' DNA-binding domain"/>
    <property type="match status" value="1"/>
</dbReference>
<comment type="function">
    <text evidence="1">The RuvA-RuvB-RuvC complex processes Holliday junction (HJ) DNA during genetic recombination and DNA repair, while the RuvA-RuvB complex plays an important role in the rescue of blocked DNA replication forks via replication fork reversal (RFR). RuvA specifically binds to HJ cruciform DNA, conferring on it an open structure. The RuvB hexamer acts as an ATP-dependent pump, pulling dsDNA into and through the RuvAB complex. RuvB forms 2 homohexamers on either side of HJ DNA bound by 1 or 2 RuvA tetramers; 4 subunits per hexamer contact DNA at a time. Coordinated motions by a converter formed by DNA-disengaged RuvB subunits stimulates ATP hydrolysis and nucleotide exchange. Immobilization of the converter enables RuvB to convert the ATP-contained energy into a lever motion, pulling 2 nucleotides of DNA out of the RuvA tetramer per ATP hydrolyzed, thus driving DNA branch migration. The RuvB motors rotate together with the DNA substrate, which together with the progressing nucleotide cycle form the mechanistic basis for DNA recombination by continuous HJ branch migration. Branch migration allows RuvC to scan DNA until it finds its consensus sequence, where it cleaves and resolves cruciform DNA.</text>
</comment>
<comment type="catalytic activity">
    <reaction evidence="1">
        <text>ATP + H2O = ADP + phosphate + H(+)</text>
        <dbReference type="Rhea" id="RHEA:13065"/>
        <dbReference type="ChEBI" id="CHEBI:15377"/>
        <dbReference type="ChEBI" id="CHEBI:15378"/>
        <dbReference type="ChEBI" id="CHEBI:30616"/>
        <dbReference type="ChEBI" id="CHEBI:43474"/>
        <dbReference type="ChEBI" id="CHEBI:456216"/>
    </reaction>
</comment>
<comment type="subunit">
    <text evidence="1">Homohexamer. Forms an RuvA(8)-RuvB(12)-Holliday junction (HJ) complex. HJ DNA is sandwiched between 2 RuvA tetramers; dsDNA enters through RuvA and exits via RuvB. An RuvB hexamer assembles on each DNA strand where it exits the tetramer. Each RuvB hexamer is contacted by two RuvA subunits (via domain III) on 2 adjacent RuvB subunits; this complex drives branch migration. In the full resolvosome a probable DNA-RuvA(4)-RuvB(12)-RuvC(2) complex forms which resolves the HJ.</text>
</comment>
<comment type="subcellular location">
    <subcellularLocation>
        <location evidence="1">Cytoplasm</location>
    </subcellularLocation>
</comment>
<comment type="domain">
    <text evidence="1">Has 3 domains, the large (RuvB-L) and small ATPase (RuvB-S) domains and the C-terminal head (RuvB-H) domain. The head domain binds DNA, while the ATPase domains jointly bind ATP, ADP or are empty depending on the state of the subunit in the translocation cycle. During a single DNA translocation step the structure of each domain remains the same, but their relative positions change.</text>
</comment>
<comment type="similarity">
    <text evidence="1">Belongs to the RuvB family.</text>
</comment>
<evidence type="ECO:0000255" key="1">
    <source>
        <dbReference type="HAMAP-Rule" id="MF_00016"/>
    </source>
</evidence>
<keyword id="KW-0067">ATP-binding</keyword>
<keyword id="KW-0963">Cytoplasm</keyword>
<keyword id="KW-0227">DNA damage</keyword>
<keyword id="KW-0233">DNA recombination</keyword>
<keyword id="KW-0234">DNA repair</keyword>
<keyword id="KW-0238">DNA-binding</keyword>
<keyword id="KW-0378">Hydrolase</keyword>
<keyword id="KW-0547">Nucleotide-binding</keyword>
<keyword id="KW-1185">Reference proteome</keyword>
<protein>
    <recommendedName>
        <fullName evidence="1">Holliday junction branch migration complex subunit RuvB</fullName>
        <ecNumber evidence="1">3.6.4.-</ecNumber>
    </recommendedName>
</protein>